<sequence length="580" mass="65022">MTAPAGPRGSETERLLTPNPGYGTQAGPSPAPPTPPEEEDLRRRLKYFFMSPCDKFRAKGRKPCKLMLQVVKILVVTVQLILFGLSNQLAVTFREENTIAFRHLFLLGYSDGADDTFAAYTREQLYQAIFHAVDQYLALPDVSLGRYAYVRGGGDPWTNGSGLALCQRYYHRGHVDPANDTFDIDPMVVTDCIQVDPPERPPPPPSDDLTLLESSSSYKNLTLKFHKLVNVTIHFRLKTINLQSLINNEIPDCYTFSVLITFDNKAHSGRIPISLETQAHIQECKHPSVFQHGDNSFRLLFDVVVILTCSLSFLLCARSLLRGFLLQNEFVGFMWRQRGRVISLWERLEFVNGWYILLVTSDVLTISGTIMKIGIEAKNLASYDVCSILLGTSTLLVWVGVIRYLTFFHNYNILIATLRVALPSVMRFCCCVAVIYLGYCFCGWIVLGPYHVKFRSLSMVSECLFSLINGDDMFVTFAAMQAQQGRSSLVWLFSQLYLYSFISLFIYMVLSLFIALITGAYDTIKHPGGAGAEESELQAYIAQCQDSPTSGKFRRGSGSACSLLCCCGRDPSEEHSLLVN</sequence>
<gene>
    <name evidence="37 47" type="primary">MCOLN1</name>
    <name type="synonym">ML4</name>
    <name evidence="38" type="synonym">TRPML1</name>
    <name type="ORF">MSTP080</name>
</gene>
<organism>
    <name type="scientific">Homo sapiens</name>
    <name type="common">Human</name>
    <dbReference type="NCBI Taxonomy" id="9606"/>
    <lineage>
        <taxon>Eukaryota</taxon>
        <taxon>Metazoa</taxon>
        <taxon>Chordata</taxon>
        <taxon>Craniata</taxon>
        <taxon>Vertebrata</taxon>
        <taxon>Euteleostomi</taxon>
        <taxon>Mammalia</taxon>
        <taxon>Eutheria</taxon>
        <taxon>Euarchontoglires</taxon>
        <taxon>Primates</taxon>
        <taxon>Haplorrhini</taxon>
        <taxon>Catarrhini</taxon>
        <taxon>Hominidae</taxon>
        <taxon>Homo</taxon>
    </lineage>
</organism>
<evidence type="ECO:0000250" key="1">
    <source>
        <dbReference type="UniProtKB" id="Q99J21"/>
    </source>
</evidence>
<evidence type="ECO:0000256" key="2">
    <source>
        <dbReference type="SAM" id="MobiDB-lite"/>
    </source>
</evidence>
<evidence type="ECO:0000269" key="3">
    <source>
    </source>
</evidence>
<evidence type="ECO:0000269" key="4">
    <source>
    </source>
</evidence>
<evidence type="ECO:0000269" key="5">
    <source>
    </source>
</evidence>
<evidence type="ECO:0000269" key="6">
    <source>
    </source>
</evidence>
<evidence type="ECO:0000269" key="7">
    <source>
    </source>
</evidence>
<evidence type="ECO:0000269" key="8">
    <source>
    </source>
</evidence>
<evidence type="ECO:0000269" key="9">
    <source>
    </source>
</evidence>
<evidence type="ECO:0000269" key="10">
    <source>
    </source>
</evidence>
<evidence type="ECO:0000269" key="11">
    <source>
    </source>
</evidence>
<evidence type="ECO:0000269" key="12">
    <source>
    </source>
</evidence>
<evidence type="ECO:0000269" key="13">
    <source>
    </source>
</evidence>
<evidence type="ECO:0000269" key="14">
    <source>
    </source>
</evidence>
<evidence type="ECO:0000269" key="15">
    <source>
    </source>
</evidence>
<evidence type="ECO:0000269" key="16">
    <source>
    </source>
</evidence>
<evidence type="ECO:0000269" key="17">
    <source>
    </source>
</evidence>
<evidence type="ECO:0000269" key="18">
    <source>
    </source>
</evidence>
<evidence type="ECO:0000269" key="19">
    <source>
    </source>
</evidence>
<evidence type="ECO:0000269" key="20">
    <source>
    </source>
</evidence>
<evidence type="ECO:0000269" key="21">
    <source>
    </source>
</evidence>
<evidence type="ECO:0000269" key="22">
    <source>
    </source>
</evidence>
<evidence type="ECO:0000269" key="23">
    <source>
    </source>
</evidence>
<evidence type="ECO:0000269" key="24">
    <source>
    </source>
</evidence>
<evidence type="ECO:0000269" key="25">
    <source>
    </source>
</evidence>
<evidence type="ECO:0000269" key="26">
    <source>
    </source>
</evidence>
<evidence type="ECO:0000269" key="27">
    <source>
    </source>
</evidence>
<evidence type="ECO:0000269" key="28">
    <source>
    </source>
</evidence>
<evidence type="ECO:0000269" key="29">
    <source>
    </source>
</evidence>
<evidence type="ECO:0000269" key="30">
    <source>
    </source>
</evidence>
<evidence type="ECO:0000269" key="31">
    <source>
    </source>
</evidence>
<evidence type="ECO:0000269" key="32">
    <source>
    </source>
</evidence>
<evidence type="ECO:0000269" key="33">
    <source>
    </source>
</evidence>
<evidence type="ECO:0000269" key="34">
    <source>
    </source>
</evidence>
<evidence type="ECO:0000303" key="35">
    <source>
    </source>
</evidence>
<evidence type="ECO:0000303" key="36">
    <source>
    </source>
</evidence>
<evidence type="ECO:0000303" key="37">
    <source>
    </source>
</evidence>
<evidence type="ECO:0000303" key="38">
    <source>
    </source>
</evidence>
<evidence type="ECO:0000303" key="39">
    <source>
    </source>
</evidence>
<evidence type="ECO:0000305" key="40"/>
<evidence type="ECO:0000305" key="41">
    <source>
    </source>
</evidence>
<evidence type="ECO:0000305" key="42">
    <source>
    </source>
</evidence>
<evidence type="ECO:0000305" key="43">
    <source>
    </source>
</evidence>
<evidence type="ECO:0000305" key="44">
    <source>
    </source>
</evidence>
<evidence type="ECO:0000305" key="45">
    <source>
    </source>
</evidence>
<evidence type="ECO:0000305" key="46">
    <source>
    </source>
</evidence>
<evidence type="ECO:0000312" key="47">
    <source>
        <dbReference type="HGNC" id="HGNC:13356"/>
    </source>
</evidence>
<evidence type="ECO:0007744" key="48">
    <source>
        <dbReference type="PDB" id="5TJA"/>
    </source>
</evidence>
<evidence type="ECO:0007744" key="49">
    <source>
        <dbReference type="PDB" id="5TJB"/>
    </source>
</evidence>
<evidence type="ECO:0007744" key="50">
    <source>
        <dbReference type="PDB" id="5TJC"/>
    </source>
</evidence>
<evidence type="ECO:0007744" key="51">
    <source>
        <dbReference type="PDB" id="5WJ5"/>
    </source>
</evidence>
<evidence type="ECO:0007744" key="52">
    <source>
        <dbReference type="PDB" id="5WJ9"/>
    </source>
</evidence>
<evidence type="ECO:0007829" key="53">
    <source>
        <dbReference type="PDB" id="5TJA"/>
    </source>
</evidence>
<evidence type="ECO:0007829" key="54">
    <source>
        <dbReference type="PDB" id="5TJB"/>
    </source>
</evidence>
<evidence type="ECO:0007829" key="55">
    <source>
        <dbReference type="PDB" id="5WJ9"/>
    </source>
</evidence>
<evidence type="ECO:0007829" key="56">
    <source>
        <dbReference type="PDB" id="7MGL"/>
    </source>
</evidence>
<accession>Q9GZU1</accession>
<accession>D6W647</accession>
<accession>Q7Z4F7</accession>
<accession>Q9H292</accession>
<accession>Q9H4B3</accession>
<accession>Q9H4B5</accession>
<comment type="function">
    <text evidence="1 8 9 11 16 18 26 27 28 29 30 31 33 41">Nonselective cation channel probably playing a role in the regulation of membrane trafficking events and of metal homeostasis (PubMed:11013137, PubMed:12459486, PubMed:14749347, PubMed:15336987, PubMed:18794901, PubMed:25720963, PubMed:27623384, PubMed:29019983). Acts as a Ca(2+)-permeable cation channel with inwardly rectifying activity (PubMed:25720963, PubMed:29019983). Proposed to play a major role in Ca(2+) release from late endosome and lysosome vesicles to the cytoplasm, which is important for many lysosome-dependent cellular events, including the fusion and trafficking of these organelles, exocytosis and autophagy (PubMed:11013137, PubMed:12459486, PubMed:14749347, PubMed:15336987, PubMed:25720963, PubMed:27623384, PubMed:29019983). Required for efficient uptake of large particles in macrophages in which Ca(2+) release from the lysosomes triggers lysosomal exocytosis. May also play a role in phagosome-lysosome fusion (By similarity). Involved in lactosylceramide trafficking indicative for a role in the regulation of late endocytic membrane fusion/fission events (PubMed:16978393). By mediating lysosomal Ca(2+) release is involved in regulation of mTORC1 signaling and in mTOR/TFEB-dependent lysosomal adaptation to environmental cues such as nutrient levels (PubMed:25720963, PubMed:25733853, PubMed:27787197). Seems to act as lysosomal active oxygen species (ROS) sensor involved in ROS-induced TFEB activation and autophagy (PubMed:27357649). Also functions as a Fe(2+) permeable channel in late endosomes and lysosomes (PubMed:18794901). Also permeable to Mg(2+), Na(+). K(+) and Cs(+) (By similarity). Proposed to play a role in zinc homeostasis probably implicating its association with TMEM163 (PubMed:25130899) In adaptive immunity, TRPML2 and TRPML1 may play redundant roles in the function of the specialized lysosomes of B cells (By similarity).</text>
</comment>
<comment type="function">
    <text evidence="44">May contribute to cellular lipase activity within the late endosomal pathway or at the cell surface which may be involved in processes of membrane reshaping and vesiculation, especially the growth of tubular structures. However, it is not known, whether it conveys the enzymatic activity directly, or merely facilitates the activity of an associated phospholipase.</text>
</comment>
<comment type="catalytic activity">
    <reaction evidence="27 33">
        <text>Ca(2+)(in) = Ca(2+)(out)</text>
        <dbReference type="Rhea" id="RHEA:29671"/>
        <dbReference type="ChEBI" id="CHEBI:29108"/>
    </reaction>
</comment>
<comment type="catalytic activity">
    <reaction evidence="18">
        <text>Fe(2+)(in) = Fe(2+)(out)</text>
        <dbReference type="Rhea" id="RHEA:28486"/>
        <dbReference type="ChEBI" id="CHEBI:29033"/>
    </reaction>
</comment>
<comment type="catalytic activity">
    <reaction evidence="1">
        <text>Mg(2+)(in) = Mg(2+)(out)</text>
        <dbReference type="Rhea" id="RHEA:29827"/>
        <dbReference type="ChEBI" id="CHEBI:18420"/>
    </reaction>
</comment>
<comment type="catalytic activity">
    <reaction evidence="1">
        <text>K(+)(in) = K(+)(out)</text>
        <dbReference type="Rhea" id="RHEA:29463"/>
        <dbReference type="ChEBI" id="CHEBI:29103"/>
    </reaction>
</comment>
<comment type="catalytic activity">
    <reaction evidence="1">
        <text>Na(+)(in) = Na(+)(out)</text>
        <dbReference type="Rhea" id="RHEA:34963"/>
        <dbReference type="ChEBI" id="CHEBI:29101"/>
    </reaction>
</comment>
<comment type="activity regulation">
    <text evidence="8 25 32 33">Channel activity is controlled by multiple regulatory mechanisms in different subcellular compartments. Channel function is transiently modulated by changes in Ca(2+) in a pH-dependent manner; pH changes modify the aggregation state of unitary channels; a negative cooperativity between extracellular/lumenal Ca(2+) and H(+) is suggested (PubMed:12459486, PubMed:28112729). Regulated by phosphoinositides in a compartment-specific manner: in lysosomes activated by PtdIns(3,5)P2 (Phosphatidylinositol 3,5-bisphosphate) and at the plasma membrane inhibited by PtdIns(4,5)P2 (Phosphatidylinositol 4,5-bisphosphate) (PubMed:22733759, PubMed:29019983).</text>
</comment>
<comment type="subunit">
    <text evidence="9 20 21 23 26 33 45">Homotetramer (PubMed:28112729, PubMed:29019983). Homooligomer (PubMed:14749347). Can heterooligomerize with MCOLN2 or MCOLN3; heteromeric assemblies have different channel properties as compared to the respective homooligomers and may be tissue-specific (PubMed:19885840). Interacts with PDCD6 (PubMed:19864416). Interacts with TMEM163 (PubMed:25130899). Interacts with LAPTM4B (PubMed:21224396).</text>
</comment>
<comment type="interaction">
    <interactant intactId="EBI-721209">
        <id>Q9GZU1</id>
    </interactant>
    <interactant intactId="EBI-743771">
        <id>Q92624</id>
        <label>APPBP2</label>
    </interactant>
    <organismsDiffer>false</organismsDiffer>
    <experiments>3</experiments>
</comment>
<comment type="interaction">
    <interactant intactId="EBI-721209">
        <id>Q9GZU1</id>
    </interactant>
    <interactant intactId="EBI-721209">
        <id>Q9GZU1</id>
        <label>MCOLN1</label>
    </interactant>
    <organismsDiffer>false</organismsDiffer>
    <experiments>3</experiments>
</comment>
<comment type="interaction">
    <interactant intactId="EBI-721209">
        <id>Q9GZU1</id>
    </interactant>
    <interactant intactId="EBI-8652744">
        <id>Q96IW7</id>
        <label>SEC22A</label>
    </interactant>
    <organismsDiffer>false</organismsDiffer>
    <experiments>3</experiments>
</comment>
<comment type="subcellular location">
    <subcellularLocation>
        <location evidence="10 23">Late endosome membrane</location>
        <topology evidence="33">Multi-pass membrane protein</topology>
    </subcellularLocation>
    <subcellularLocation>
        <location evidence="8 23 28 42 43">Lysosome membrane</location>
        <topology evidence="33">Multi-pass membrane protein</topology>
    </subcellularLocation>
    <subcellularLocation>
        <location evidence="8">Cytoplasmic vesicle membrane</location>
        <topology evidence="33">Multi-pass membrane protein</topology>
    </subcellularLocation>
    <subcellularLocation>
        <location evidence="1">Cell projection</location>
        <location evidence="1">Phagocytic cup</location>
    </subcellularLocation>
    <subcellularLocation>
        <location evidence="1">Cytoplasmic vesicle</location>
        <location evidence="1">Phagosome membrane</location>
        <topology evidence="33">Multi-pass membrane protein</topology>
    </subcellularLocation>
    <subcellularLocation>
        <location evidence="46">Cell membrane</location>
        <topology evidence="33">Multi-pass membrane protein</topology>
    </subcellularLocation>
    <text evidence="8 18 32 33 42">Delivery from the trans-Golgi to lysosomes seems to occur mainly in a direct intracellular manner without intermediate delivery to the plasma membrane (PubMed:16497227). Under normal conditions, restricted to intracellular compartments so that only a very minor proportion is present at the cell membrane (PubMed:12459486, PubMed:18794901, PubMed:28112729, PubMed:29019983).</text>
</comment>
<comment type="tissue specificity">
    <text evidence="3 4 5">Widely expressed in adult and fetal tissues.</text>
</comment>
<comment type="domain">
    <text evidence="32">The most N-terminal extracellular/lumenal domain (referred to as I-II linker or polycystin-mucolipin domain) contributes to a structure with a four-fold rotational symmetry in a tetrameric assembly; the structure contains a central highly electronegative pore with a 14 A diameter. The pore is critical for Ca(2+) and pH regulation. The protruding structure formed by the I-II linkers may contain all the interaction sites with lipids and proteins in the endolysosomal lumen.</text>
</comment>
<comment type="PTM">
    <text evidence="14">Palmitoylated; involved in association with membranes.</text>
</comment>
<comment type="PTM">
    <text evidence="17">Phosphorylation by PKA inhibits channel activity. Dephosphorylation increases activity.</text>
</comment>
<comment type="PTM">
    <text evidence="13">Proteolytically cleaved probably involving multiple lysosomal proteases including cathepsin B; inhibits lysosomal channel activity (PubMed:16257972).</text>
</comment>
<comment type="disease" evidence="3 4 5 6 7 9 10 12 16 18 22 24 32">
    <disease id="DI-01998">
        <name>Mucolipidosis 4</name>
        <acronym>ML4</acronym>
        <description>An autosomal recessive lysosomal storage disorder characterized by severe psychomotor retardation and ophthalmologic abnormalities, including corneal opacity, retinal degeneration and strabismus. Storage bodies of lipids and water-soluble substances are seen by electron microscopy in almost every cell type of the patients. Most patients are unable to speak or walk independently and reach a maximal developmental level of 1-2 years. All patients have constitutive achlorhydia associated with a secondary elevation of serum gastrin levels.</description>
        <dbReference type="MIM" id="252650"/>
    </disease>
    <text>The disease is caused by variants affecting the gene represented in this entry.</text>
</comment>
<comment type="disease" evidence="34">
    <disease id="DI-06868">
        <name>Corneal dystrophy, Lisch epithelial</name>
        <acronym>LECD</acronym>
        <description>An autosomal dominant corneal dystrophy characterized by gray, band-shaped and feathery opacities in the cornea, that sometimes appear in whorled patterns. The opaque bands consist of clear, densely crowded, intra-epithelial blisters. Vision may be impaired if the bands involve the central cornea.</description>
        <dbReference type="MIM" id="620763"/>
    </disease>
    <text>The disease is caused by variants affecting the gene represented in this entry.</text>
</comment>
<comment type="similarity">
    <text evidence="40">Belongs to the transient receptor (TC 1.A.4) family. Polycystin subfamily. MCOLN1 sub-subfamily.</text>
</comment>
<comment type="caution">
    <text evidence="40">There are conflicting results relative to ion selectivity and permeation. Initially outward rectification has been reported which makes the proposed activity as lysosymal Ca(2+) release channel unlikely. Inward rectification has been decribed in later studies supporting the Ca(2+) release activity.</text>
</comment>
<comment type="sequence caution" evidence="40">
    <conflict type="erroneous initiation">
        <sequence resource="EMBL-CDS" id="AAQ13604"/>
    </conflict>
    <text>Truncated N-terminus.</text>
</comment>
<comment type="sequence caution" evidence="40">
    <conflict type="miscellaneous discrepancy">
        <sequence resource="EMBL-CDS" id="CAC07813"/>
    </conflict>
    <text>Probable cloning artifact.</text>
</comment>
<comment type="sequence caution" evidence="40">
    <conflict type="erroneous gene model prediction">
        <sequence resource="EMBL-CDS" id="EAW69031"/>
    </conflict>
</comment>
<comment type="sequence caution" evidence="40">
    <conflict type="erroneous gene model prediction">
        <sequence resource="EMBL-CDS" id="EAW69034"/>
    </conflict>
</comment>
<protein>
    <recommendedName>
        <fullName evidence="36">Mucolipin-1</fullName>
        <shortName>ML1</shortName>
    </recommendedName>
    <alternativeName>
        <fullName>MG-2</fullName>
    </alternativeName>
    <alternativeName>
        <fullName evidence="35">Mucolipidin</fullName>
    </alternativeName>
    <alternativeName>
        <fullName>Transient receptor potential channel mucolipin 1</fullName>
        <shortName evidence="39">TRPML1</shortName>
    </alternativeName>
</protein>
<dbReference type="EMBL" id="AJ293659">
    <property type="protein sequence ID" value="CAC07813.1"/>
    <property type="status" value="ALT_SEQ"/>
    <property type="molecule type" value="mRNA"/>
</dbReference>
<dbReference type="EMBL" id="AJ293970">
    <property type="protein sequence ID" value="CAC08215.1"/>
    <property type="molecule type" value="mRNA"/>
</dbReference>
<dbReference type="EMBL" id="AF287269">
    <property type="protein sequence ID" value="AAG00797.1"/>
    <property type="molecule type" value="mRNA"/>
</dbReference>
<dbReference type="EMBL" id="AF287270">
    <property type="protein sequence ID" value="AAG00798.1"/>
    <property type="molecule type" value="Genomic_DNA"/>
</dbReference>
<dbReference type="EMBL" id="AF249319">
    <property type="protein sequence ID" value="AAG10422.1"/>
    <property type="molecule type" value="mRNA"/>
</dbReference>
<dbReference type="EMBL" id="AF305579">
    <property type="protein sequence ID" value="AAG42242.1"/>
    <property type="molecule type" value="Genomic_DNA"/>
</dbReference>
<dbReference type="EMBL" id="AF305572">
    <property type="protein sequence ID" value="AAG42242.1"/>
    <property type="status" value="JOINED"/>
    <property type="molecule type" value="Genomic_DNA"/>
</dbReference>
<dbReference type="EMBL" id="AF305573">
    <property type="protein sequence ID" value="AAG42242.1"/>
    <property type="status" value="JOINED"/>
    <property type="molecule type" value="Genomic_DNA"/>
</dbReference>
<dbReference type="EMBL" id="AF305574">
    <property type="protein sequence ID" value="AAG42242.1"/>
    <property type="status" value="JOINED"/>
    <property type="molecule type" value="Genomic_DNA"/>
</dbReference>
<dbReference type="EMBL" id="AF305575">
    <property type="protein sequence ID" value="AAG42242.1"/>
    <property type="status" value="JOINED"/>
    <property type="molecule type" value="Genomic_DNA"/>
</dbReference>
<dbReference type="EMBL" id="AF305576">
    <property type="protein sequence ID" value="AAG42242.1"/>
    <property type="status" value="JOINED"/>
    <property type="molecule type" value="Genomic_DNA"/>
</dbReference>
<dbReference type="EMBL" id="AF305577">
    <property type="protein sequence ID" value="AAG42242.1"/>
    <property type="status" value="JOINED"/>
    <property type="molecule type" value="Genomic_DNA"/>
</dbReference>
<dbReference type="EMBL" id="AF305578">
    <property type="protein sequence ID" value="AAG42242.1"/>
    <property type="status" value="JOINED"/>
    <property type="molecule type" value="Genomic_DNA"/>
</dbReference>
<dbReference type="EMBL" id="AK026102">
    <property type="protein sequence ID" value="BAB15360.1"/>
    <property type="molecule type" value="mRNA"/>
</dbReference>
<dbReference type="EMBL" id="CH471139">
    <property type="protein sequence ID" value="EAW69031.1"/>
    <property type="status" value="ALT_SEQ"/>
    <property type="molecule type" value="Genomic_DNA"/>
</dbReference>
<dbReference type="EMBL" id="CH471139">
    <property type="protein sequence ID" value="EAW69034.1"/>
    <property type="status" value="ALT_SEQ"/>
    <property type="molecule type" value="Genomic_DNA"/>
</dbReference>
<dbReference type="EMBL" id="BC005149">
    <property type="protein sequence ID" value="AAH05149.1"/>
    <property type="molecule type" value="mRNA"/>
</dbReference>
<dbReference type="EMBL" id="AF171088">
    <property type="protein sequence ID" value="AAQ13604.1"/>
    <property type="status" value="ALT_INIT"/>
    <property type="molecule type" value="mRNA"/>
</dbReference>
<dbReference type="CCDS" id="CCDS12180.1"/>
<dbReference type="RefSeq" id="NP_065394.1">
    <property type="nucleotide sequence ID" value="NM_020533.3"/>
</dbReference>
<dbReference type="PDB" id="5TJA">
    <property type="method" value="X-ray"/>
    <property type="resolution" value="2.30 A"/>
    <property type="chains" value="A=84-296"/>
</dbReference>
<dbReference type="PDB" id="5TJB">
    <property type="method" value="X-ray"/>
    <property type="resolution" value="2.40 A"/>
    <property type="chains" value="A=84-296"/>
</dbReference>
<dbReference type="PDB" id="5TJC">
    <property type="method" value="X-ray"/>
    <property type="resolution" value="2.40 A"/>
    <property type="chains" value="A=84-296"/>
</dbReference>
<dbReference type="PDB" id="5WJ5">
    <property type="method" value="EM"/>
    <property type="resolution" value="3.70 A"/>
    <property type="chains" value="A/B/C/D=1-580"/>
</dbReference>
<dbReference type="PDB" id="5WJ9">
    <property type="method" value="EM"/>
    <property type="resolution" value="3.49 A"/>
    <property type="chains" value="A/B/C/D=1-580"/>
</dbReference>
<dbReference type="PDB" id="6E7P">
    <property type="method" value="EM"/>
    <property type="resolution" value="3.50 A"/>
    <property type="chains" value="A/B/C/D=1-580"/>
</dbReference>
<dbReference type="PDB" id="6E7Y">
    <property type="method" value="EM"/>
    <property type="resolution" value="3.57 A"/>
    <property type="chains" value="A/B/C/D=1-580"/>
</dbReference>
<dbReference type="PDB" id="6E7Z">
    <property type="method" value="EM"/>
    <property type="resolution" value="3.73 A"/>
    <property type="chains" value="A/B/C/D=1-580"/>
</dbReference>
<dbReference type="PDB" id="7MGL">
    <property type="method" value="EM"/>
    <property type="resolution" value="2.90 A"/>
    <property type="chains" value="A/B/C/D=1-580"/>
</dbReference>
<dbReference type="PDBsum" id="5TJA"/>
<dbReference type="PDBsum" id="5TJB"/>
<dbReference type="PDBsum" id="5TJC"/>
<dbReference type="PDBsum" id="5WJ5"/>
<dbReference type="PDBsum" id="5WJ9"/>
<dbReference type="PDBsum" id="6E7P"/>
<dbReference type="PDBsum" id="6E7Y"/>
<dbReference type="PDBsum" id="6E7Z"/>
<dbReference type="PDBsum" id="7MGL"/>
<dbReference type="EMDB" id="EMD-23828"/>
<dbReference type="EMDB" id="EMD-8840"/>
<dbReference type="EMDB" id="EMD-8841"/>
<dbReference type="EMDB" id="EMD-9000"/>
<dbReference type="EMDB" id="EMD-9001"/>
<dbReference type="EMDB" id="EMD-9002"/>
<dbReference type="SMR" id="Q9GZU1"/>
<dbReference type="BioGRID" id="121441">
    <property type="interactions" value="21"/>
</dbReference>
<dbReference type="DIP" id="DIP-62090N"/>
<dbReference type="ELM" id="Q9GZU1"/>
<dbReference type="FunCoup" id="Q9GZU1">
    <property type="interactions" value="2566"/>
</dbReference>
<dbReference type="IntAct" id="Q9GZU1">
    <property type="interactions" value="16"/>
</dbReference>
<dbReference type="MINT" id="Q9GZU1"/>
<dbReference type="STRING" id="9606.ENSP00000264079"/>
<dbReference type="BindingDB" id="Q9GZU1"/>
<dbReference type="ChEMBL" id="CHEMBL4524043"/>
<dbReference type="GuidetoPHARMACOLOGY" id="501"/>
<dbReference type="TCDB" id="1.A.5.3.1">
    <property type="family name" value="the polycystin cation channel (pcc) family"/>
</dbReference>
<dbReference type="GlyCosmos" id="Q9GZU1">
    <property type="glycosylation" value="1 site, No reported glycans"/>
</dbReference>
<dbReference type="GlyGen" id="Q9GZU1">
    <property type="glycosylation" value="3 sites, 3 N-linked glycans (2 sites)"/>
</dbReference>
<dbReference type="iPTMnet" id="Q9GZU1"/>
<dbReference type="PhosphoSitePlus" id="Q9GZU1"/>
<dbReference type="SwissPalm" id="Q9GZU1"/>
<dbReference type="BioMuta" id="MCOLN1"/>
<dbReference type="DMDM" id="50401163"/>
<dbReference type="jPOST" id="Q9GZU1"/>
<dbReference type="MassIVE" id="Q9GZU1"/>
<dbReference type="PaxDb" id="9606-ENSP00000264079"/>
<dbReference type="PeptideAtlas" id="Q9GZU1"/>
<dbReference type="ProteomicsDB" id="80143"/>
<dbReference type="Pumba" id="Q9GZU1"/>
<dbReference type="Antibodypedia" id="12053">
    <property type="antibodies" value="178 antibodies from 22 providers"/>
</dbReference>
<dbReference type="DNASU" id="57192"/>
<dbReference type="Ensembl" id="ENST00000264079.11">
    <property type="protein sequence ID" value="ENSP00000264079.5"/>
    <property type="gene ID" value="ENSG00000090674.16"/>
</dbReference>
<dbReference type="GeneID" id="57192"/>
<dbReference type="KEGG" id="hsa:57192"/>
<dbReference type="MANE-Select" id="ENST00000264079.11">
    <property type="protein sequence ID" value="ENSP00000264079.5"/>
    <property type="RefSeq nucleotide sequence ID" value="NM_020533.3"/>
    <property type="RefSeq protein sequence ID" value="NP_065394.1"/>
</dbReference>
<dbReference type="UCSC" id="uc002mgo.4">
    <property type="organism name" value="human"/>
</dbReference>
<dbReference type="AGR" id="HGNC:13356"/>
<dbReference type="CTD" id="57192"/>
<dbReference type="DisGeNET" id="57192"/>
<dbReference type="GeneCards" id="MCOLN1"/>
<dbReference type="GeneReviews" id="MCOLN1"/>
<dbReference type="HGNC" id="HGNC:13356">
    <property type="gene designation" value="MCOLN1"/>
</dbReference>
<dbReference type="HPA" id="ENSG00000090674">
    <property type="expression patterns" value="Low tissue specificity"/>
</dbReference>
<dbReference type="MalaCards" id="MCOLN1"/>
<dbReference type="MIM" id="252650">
    <property type="type" value="phenotype"/>
</dbReference>
<dbReference type="MIM" id="605248">
    <property type="type" value="gene"/>
</dbReference>
<dbReference type="MIM" id="620763">
    <property type="type" value="phenotype"/>
</dbReference>
<dbReference type="neXtProt" id="NX_Q9GZU1"/>
<dbReference type="OpenTargets" id="ENSG00000090674"/>
<dbReference type="Orphanet" id="578">
    <property type="disease" value="Mucolipidosis type IV"/>
</dbReference>
<dbReference type="PharmGKB" id="PA30699"/>
<dbReference type="VEuPathDB" id="HostDB:ENSG00000090674"/>
<dbReference type="eggNOG" id="KOG3733">
    <property type="taxonomic scope" value="Eukaryota"/>
</dbReference>
<dbReference type="GeneTree" id="ENSGT00950000183036"/>
<dbReference type="HOGENOM" id="CLU_020945_1_1_1"/>
<dbReference type="InParanoid" id="Q9GZU1"/>
<dbReference type="OMA" id="SPMQENV"/>
<dbReference type="OrthoDB" id="263481at2759"/>
<dbReference type="PAN-GO" id="Q9GZU1">
    <property type="GO annotations" value="3 GO annotations based on evolutionary models"/>
</dbReference>
<dbReference type="PhylomeDB" id="Q9GZU1"/>
<dbReference type="TreeFam" id="TF317783"/>
<dbReference type="PathwayCommons" id="Q9GZU1"/>
<dbReference type="Reactome" id="R-HSA-3295583">
    <property type="pathway name" value="TRP channels"/>
</dbReference>
<dbReference type="Reactome" id="R-HSA-917977">
    <property type="pathway name" value="Transferrin endocytosis and recycling"/>
</dbReference>
<dbReference type="SignaLink" id="Q9GZU1"/>
<dbReference type="SIGNOR" id="Q9GZU1"/>
<dbReference type="BioGRID-ORCS" id="57192">
    <property type="hits" value="20 hits in 1165 CRISPR screens"/>
</dbReference>
<dbReference type="ChiTaRS" id="MCOLN1">
    <property type="organism name" value="human"/>
</dbReference>
<dbReference type="GeneWiki" id="MCOLN1"/>
<dbReference type="GenomeRNAi" id="57192"/>
<dbReference type="Pharos" id="Q9GZU1">
    <property type="development level" value="Tchem"/>
</dbReference>
<dbReference type="PRO" id="PR:Q9GZU1"/>
<dbReference type="Proteomes" id="UP000005640">
    <property type="component" value="Chromosome 19"/>
</dbReference>
<dbReference type="RNAct" id="Q9GZU1">
    <property type="molecule type" value="protein"/>
</dbReference>
<dbReference type="Bgee" id="ENSG00000090674">
    <property type="expression patterns" value="Expressed in spleen and 174 other cell types or tissues"/>
</dbReference>
<dbReference type="ExpressionAtlas" id="Q9GZU1">
    <property type="expression patterns" value="baseline and differential"/>
</dbReference>
<dbReference type="GO" id="GO:0042995">
    <property type="term" value="C:cell projection"/>
    <property type="evidence" value="ECO:0007669"/>
    <property type="project" value="UniProtKB-KW"/>
</dbReference>
<dbReference type="GO" id="GO:0010008">
    <property type="term" value="C:endosome membrane"/>
    <property type="evidence" value="ECO:0000304"/>
    <property type="project" value="Reactome"/>
</dbReference>
<dbReference type="GO" id="GO:0005794">
    <property type="term" value="C:Golgi apparatus"/>
    <property type="evidence" value="ECO:0000314"/>
    <property type="project" value="HPA"/>
</dbReference>
<dbReference type="GO" id="GO:0043231">
    <property type="term" value="C:intracellular membrane-bounded organelle"/>
    <property type="evidence" value="ECO:0000314"/>
    <property type="project" value="HPA"/>
</dbReference>
<dbReference type="GO" id="GO:0005770">
    <property type="term" value="C:late endosome"/>
    <property type="evidence" value="ECO:0000314"/>
    <property type="project" value="UniProtKB"/>
</dbReference>
<dbReference type="GO" id="GO:0031902">
    <property type="term" value="C:late endosome membrane"/>
    <property type="evidence" value="ECO:0007669"/>
    <property type="project" value="UniProtKB-SubCell"/>
</dbReference>
<dbReference type="GO" id="GO:0005765">
    <property type="term" value="C:lysosomal membrane"/>
    <property type="evidence" value="ECO:0000314"/>
    <property type="project" value="UniProtKB"/>
</dbReference>
<dbReference type="GO" id="GO:0005764">
    <property type="term" value="C:lysosome"/>
    <property type="evidence" value="ECO:0000314"/>
    <property type="project" value="UniProtKB"/>
</dbReference>
<dbReference type="GO" id="GO:0016020">
    <property type="term" value="C:membrane"/>
    <property type="evidence" value="ECO:0000314"/>
    <property type="project" value="UniProtKB"/>
</dbReference>
<dbReference type="GO" id="GO:0005654">
    <property type="term" value="C:nucleoplasm"/>
    <property type="evidence" value="ECO:0000314"/>
    <property type="project" value="HPA"/>
</dbReference>
<dbReference type="GO" id="GO:0001891">
    <property type="term" value="C:phagocytic cup"/>
    <property type="evidence" value="ECO:0007669"/>
    <property type="project" value="UniProtKB-SubCell"/>
</dbReference>
<dbReference type="GO" id="GO:0030670">
    <property type="term" value="C:phagocytic vesicle membrane"/>
    <property type="evidence" value="ECO:0007669"/>
    <property type="project" value="UniProtKB-SubCell"/>
</dbReference>
<dbReference type="GO" id="GO:0005886">
    <property type="term" value="C:plasma membrane"/>
    <property type="evidence" value="ECO:0000318"/>
    <property type="project" value="GO_Central"/>
</dbReference>
<dbReference type="GO" id="GO:0043235">
    <property type="term" value="C:receptor complex"/>
    <property type="evidence" value="ECO:0000314"/>
    <property type="project" value="MGI"/>
</dbReference>
<dbReference type="GO" id="GO:0005262">
    <property type="term" value="F:calcium channel activity"/>
    <property type="evidence" value="ECO:0000314"/>
    <property type="project" value="UniProtKB"/>
</dbReference>
<dbReference type="GO" id="GO:0042802">
    <property type="term" value="F:identical protein binding"/>
    <property type="evidence" value="ECO:0000353"/>
    <property type="project" value="IntAct"/>
</dbReference>
<dbReference type="GO" id="GO:0097682">
    <property type="term" value="F:intracellularly phosphatidylinositol-3,5-bisphosphate-gated monatomic cation channel activity"/>
    <property type="evidence" value="ECO:0000250"/>
    <property type="project" value="UniProtKB"/>
</dbReference>
<dbReference type="GO" id="GO:0005381">
    <property type="term" value="F:iron ion transmembrane transporter activity"/>
    <property type="evidence" value="ECO:0000314"/>
    <property type="project" value="UniProtKB"/>
</dbReference>
<dbReference type="GO" id="GO:0099604">
    <property type="term" value="F:ligand-gated calcium channel activity"/>
    <property type="evidence" value="ECO:0000314"/>
    <property type="project" value="UniProtKB"/>
</dbReference>
<dbReference type="GO" id="GO:0008289">
    <property type="term" value="F:lipid binding"/>
    <property type="evidence" value="ECO:0007669"/>
    <property type="project" value="UniProtKB-KW"/>
</dbReference>
<dbReference type="GO" id="GO:0005253">
    <property type="term" value="F:monoatomic anion channel activity"/>
    <property type="evidence" value="ECO:0000250"/>
    <property type="project" value="UniProtKB"/>
</dbReference>
<dbReference type="GO" id="GO:0005261">
    <property type="term" value="F:monoatomic cation channel activity"/>
    <property type="evidence" value="ECO:0000303"/>
    <property type="project" value="UniProtKB"/>
</dbReference>
<dbReference type="GO" id="GO:0072345">
    <property type="term" value="F:NAADP-sensitive calcium-release channel activity"/>
    <property type="evidence" value="ECO:0000318"/>
    <property type="project" value="GO_Central"/>
</dbReference>
<dbReference type="GO" id="GO:0005267">
    <property type="term" value="F:potassium channel activity"/>
    <property type="evidence" value="ECO:0000250"/>
    <property type="project" value="UniProtKB"/>
</dbReference>
<dbReference type="GO" id="GO:0005272">
    <property type="term" value="F:sodium channel activity"/>
    <property type="evidence" value="ECO:0000250"/>
    <property type="project" value="UniProtKB"/>
</dbReference>
<dbReference type="GO" id="GO:0002250">
    <property type="term" value="P:adaptive immune response"/>
    <property type="evidence" value="ECO:0007669"/>
    <property type="project" value="UniProtKB-KW"/>
</dbReference>
<dbReference type="GO" id="GO:0097352">
    <property type="term" value="P:autophagosome maturation"/>
    <property type="evidence" value="ECO:0007669"/>
    <property type="project" value="Ensembl"/>
</dbReference>
<dbReference type="GO" id="GO:1901660">
    <property type="term" value="P:calcium ion export"/>
    <property type="evidence" value="ECO:0000314"/>
    <property type="project" value="UniProtKB"/>
</dbReference>
<dbReference type="GO" id="GO:0070588">
    <property type="term" value="P:calcium ion transmembrane transport"/>
    <property type="evidence" value="ECO:0000314"/>
    <property type="project" value="UniProtKB"/>
</dbReference>
<dbReference type="GO" id="GO:0071277">
    <property type="term" value="P:cellular response to calcium ion"/>
    <property type="evidence" value="ECO:0000250"/>
    <property type="project" value="UniProtKB"/>
</dbReference>
<dbReference type="GO" id="GO:0071467">
    <property type="term" value="P:cellular response to pH"/>
    <property type="evidence" value="ECO:0000250"/>
    <property type="project" value="UniProtKB"/>
</dbReference>
<dbReference type="GO" id="GO:0034755">
    <property type="term" value="P:iron ion transmembrane transport"/>
    <property type="evidence" value="ECO:0000315"/>
    <property type="project" value="UniProtKB"/>
</dbReference>
<dbReference type="GO" id="GO:0006812">
    <property type="term" value="P:monoatomic cation transport"/>
    <property type="evidence" value="ECO:0000303"/>
    <property type="project" value="UniProtKB"/>
</dbReference>
<dbReference type="GO" id="GO:0090382">
    <property type="term" value="P:phagosome maturation"/>
    <property type="evidence" value="ECO:0000314"/>
    <property type="project" value="UniProtKB"/>
</dbReference>
<dbReference type="GO" id="GO:1905673">
    <property type="term" value="P:positive regulation of lysosome organization"/>
    <property type="evidence" value="ECO:0000314"/>
    <property type="project" value="UniProtKB"/>
</dbReference>
<dbReference type="GO" id="GO:0051289">
    <property type="term" value="P:protein homotetramerization"/>
    <property type="evidence" value="ECO:0000314"/>
    <property type="project" value="UniProtKB"/>
</dbReference>
<dbReference type="GO" id="GO:0051209">
    <property type="term" value="P:release of sequestered calcium ion into cytosol"/>
    <property type="evidence" value="ECO:0007669"/>
    <property type="project" value="Ensembl"/>
</dbReference>
<dbReference type="GO" id="GO:0033572">
    <property type="term" value="P:transferrin transport"/>
    <property type="evidence" value="ECO:0000304"/>
    <property type="project" value="Reactome"/>
</dbReference>
<dbReference type="CDD" id="cd21070">
    <property type="entry name" value="ELD_TRPML1"/>
    <property type="match status" value="1"/>
</dbReference>
<dbReference type="DisProt" id="DP02757"/>
<dbReference type="FunFam" id="1.10.287.70:FF:000033">
    <property type="entry name" value="Mucolipin 1"/>
    <property type="match status" value="1"/>
</dbReference>
<dbReference type="Gene3D" id="1.10.287.70">
    <property type="match status" value="1"/>
</dbReference>
<dbReference type="InterPro" id="IPR049134">
    <property type="entry name" value="MCLN_ECD"/>
</dbReference>
<dbReference type="InterPro" id="IPR047316">
    <property type="entry name" value="ML1_ELD"/>
</dbReference>
<dbReference type="InterPro" id="IPR039031">
    <property type="entry name" value="Mucolipin"/>
</dbReference>
<dbReference type="InterPro" id="IPR013122">
    <property type="entry name" value="PKD1_2_channel"/>
</dbReference>
<dbReference type="PANTHER" id="PTHR12127">
    <property type="entry name" value="MUCOLIPIN"/>
    <property type="match status" value="1"/>
</dbReference>
<dbReference type="PANTHER" id="PTHR12127:SF6">
    <property type="entry name" value="MUCOLIPIN-1"/>
    <property type="match status" value="1"/>
</dbReference>
<dbReference type="Pfam" id="PF21381">
    <property type="entry name" value="MCLN_ECD"/>
    <property type="match status" value="1"/>
</dbReference>
<dbReference type="Pfam" id="PF08016">
    <property type="entry name" value="PKD_channel"/>
    <property type="match status" value="1"/>
</dbReference>
<name>MCLN1_HUMAN</name>
<keyword id="KW-0002">3D-structure</keyword>
<keyword id="KW-1064">Adaptive immunity</keyword>
<keyword id="KW-0106">Calcium</keyword>
<keyword id="KW-0109">Calcium transport</keyword>
<keyword id="KW-1003">Cell membrane</keyword>
<keyword id="KW-0966">Cell projection</keyword>
<keyword id="KW-1212">Corneal dystrophy</keyword>
<keyword id="KW-0968">Cytoplasmic vesicle</keyword>
<keyword id="KW-0225">Disease variant</keyword>
<keyword id="KW-1015">Disulfide bond</keyword>
<keyword id="KW-0967">Endosome</keyword>
<keyword id="KW-0325">Glycoprotein</keyword>
<keyword id="KW-0391">Immunity</keyword>
<keyword id="KW-0407">Ion channel</keyword>
<keyword id="KW-0406">Ion transport</keyword>
<keyword id="KW-0446">Lipid-binding</keyword>
<keyword id="KW-0449">Lipoprotein</keyword>
<keyword id="KW-0458">Lysosome</keyword>
<keyword id="KW-0472">Membrane</keyword>
<keyword id="KW-0942">Mucolipidosis</keyword>
<keyword id="KW-0564">Palmitate</keyword>
<keyword id="KW-0597">Phosphoprotein</keyword>
<keyword id="KW-1267">Proteomics identification</keyword>
<keyword id="KW-1185">Reference proteome</keyword>
<keyword id="KW-0812">Transmembrane</keyword>
<keyword id="KW-1133">Transmembrane helix</keyword>
<keyword id="KW-0813">Transport</keyword>
<reference key="1">
    <citation type="journal article" date="2000" name="Am. J. Hum. Genet.">
        <title>Cloning of the gene encoding a novel integral membrane protein, mucolipidin, and identification of the two major founder mutations causing mucolipidosis type IV.</title>
        <authorList>
            <person name="Bassi M.T."/>
            <person name="Manzoni M."/>
            <person name="Monti E."/>
            <person name="Pizzo M.T."/>
            <person name="Ballabio A."/>
            <person name="Borsani G."/>
        </authorList>
    </citation>
    <scope>NUCLEOTIDE SEQUENCE [MRNA]</scope>
    <scope>PROBABLE FUNCTION</scope>
    <scope>TISSUE SPECIFICITY</scope>
    <scope>SUBCELLULAR LOCATION</scope>
    <scope>INVOLVEMENT IN ML4</scope>
</reference>
<reference key="2">
    <citation type="journal article" date="2000" name="Hum. Mol. Genet.">
        <title>Mucolipidosis type IV is caused by mutations in a gene encoding a novel transient receptor potential channel.</title>
        <authorList>
            <person name="Sun M."/>
            <person name="Goldin E."/>
            <person name="Stahl S."/>
            <person name="Falardeau J.L."/>
            <person name="Kennedy J.C."/>
            <person name="Acierno J.S. Jr."/>
            <person name="Bove C."/>
            <person name="Kaneski C.R."/>
            <person name="Nagle J."/>
            <person name="Bromley M.C."/>
            <person name="Colman M."/>
            <person name="Schiffmann R."/>
            <person name="Slaugenhaupt S.A."/>
        </authorList>
    </citation>
    <scope>NUCLEOTIDE SEQUENCE [GENOMIC DNA / MRNA]</scope>
    <scope>TISSUE SPECIFICITY</scope>
    <scope>VARIANTS ML4 172-ARG--ASN-580 DEL; TYR-362; PHE-408 DEL AND LEU-446</scope>
</reference>
<reference key="3">
    <citation type="journal article" date="2000" name="Nat. Genet.">
        <title>Identification of the gene causing mucolipidosis type IV.</title>
        <authorList>
            <person name="Bargal R."/>
            <person name="Avidan N."/>
            <person name="Ben-Asher E."/>
            <person name="Olender Z."/>
            <person name="Zeigler M."/>
            <person name="Frumkin A."/>
            <person name="Raas-Rothschild A."/>
            <person name="Glusman G."/>
            <person name="Lancet D."/>
            <person name="Bach G."/>
        </authorList>
    </citation>
    <scope>NUCLEOTIDE SEQUENCE [MRNA]</scope>
    <scope>TISSUE SPECIFICITY</scope>
    <scope>INVOLVEMENT IN ML4</scope>
</reference>
<reference key="4">
    <citation type="journal article" date="2004" name="Nat. Genet.">
        <title>Complete sequencing and characterization of 21,243 full-length human cDNAs.</title>
        <authorList>
            <person name="Ota T."/>
            <person name="Suzuki Y."/>
            <person name="Nishikawa T."/>
            <person name="Otsuki T."/>
            <person name="Sugiyama T."/>
            <person name="Irie R."/>
            <person name="Wakamatsu A."/>
            <person name="Hayashi K."/>
            <person name="Sato H."/>
            <person name="Nagai K."/>
            <person name="Kimura K."/>
            <person name="Makita H."/>
            <person name="Sekine M."/>
            <person name="Obayashi M."/>
            <person name="Nishi T."/>
            <person name="Shibahara T."/>
            <person name="Tanaka T."/>
            <person name="Ishii S."/>
            <person name="Yamamoto J."/>
            <person name="Saito K."/>
            <person name="Kawai Y."/>
            <person name="Isono Y."/>
            <person name="Nakamura Y."/>
            <person name="Nagahari K."/>
            <person name="Murakami K."/>
            <person name="Yasuda T."/>
            <person name="Iwayanagi T."/>
            <person name="Wagatsuma M."/>
            <person name="Shiratori A."/>
            <person name="Sudo H."/>
            <person name="Hosoiri T."/>
            <person name="Kaku Y."/>
            <person name="Kodaira H."/>
            <person name="Kondo H."/>
            <person name="Sugawara M."/>
            <person name="Takahashi M."/>
            <person name="Kanda K."/>
            <person name="Yokoi T."/>
            <person name="Furuya T."/>
            <person name="Kikkawa E."/>
            <person name="Omura Y."/>
            <person name="Abe K."/>
            <person name="Kamihara K."/>
            <person name="Katsuta N."/>
            <person name="Sato K."/>
            <person name="Tanikawa M."/>
            <person name="Yamazaki M."/>
            <person name="Ninomiya K."/>
            <person name="Ishibashi T."/>
            <person name="Yamashita H."/>
            <person name="Murakawa K."/>
            <person name="Fujimori K."/>
            <person name="Tanai H."/>
            <person name="Kimata M."/>
            <person name="Watanabe M."/>
            <person name="Hiraoka S."/>
            <person name="Chiba Y."/>
            <person name="Ishida S."/>
            <person name="Ono Y."/>
            <person name="Takiguchi S."/>
            <person name="Watanabe S."/>
            <person name="Yosida M."/>
            <person name="Hotuta T."/>
            <person name="Kusano J."/>
            <person name="Kanehori K."/>
            <person name="Takahashi-Fujii A."/>
            <person name="Hara H."/>
            <person name="Tanase T.-O."/>
            <person name="Nomura Y."/>
            <person name="Togiya S."/>
            <person name="Komai F."/>
            <person name="Hara R."/>
            <person name="Takeuchi K."/>
            <person name="Arita M."/>
            <person name="Imose N."/>
            <person name="Musashino K."/>
            <person name="Yuuki H."/>
            <person name="Oshima A."/>
            <person name="Sasaki N."/>
            <person name="Aotsuka S."/>
            <person name="Yoshikawa Y."/>
            <person name="Matsunawa H."/>
            <person name="Ichihara T."/>
            <person name="Shiohata N."/>
            <person name="Sano S."/>
            <person name="Moriya S."/>
            <person name="Momiyama H."/>
            <person name="Satoh N."/>
            <person name="Takami S."/>
            <person name="Terashima Y."/>
            <person name="Suzuki O."/>
            <person name="Nakagawa S."/>
            <person name="Senoh A."/>
            <person name="Mizoguchi H."/>
            <person name="Goto Y."/>
            <person name="Shimizu F."/>
            <person name="Wakebe H."/>
            <person name="Hishigaki H."/>
            <person name="Watanabe T."/>
            <person name="Sugiyama A."/>
            <person name="Takemoto M."/>
            <person name="Kawakami B."/>
            <person name="Yamazaki M."/>
            <person name="Watanabe K."/>
            <person name="Kumagai A."/>
            <person name="Itakura S."/>
            <person name="Fukuzumi Y."/>
            <person name="Fujimori Y."/>
            <person name="Komiyama M."/>
            <person name="Tashiro H."/>
            <person name="Tanigami A."/>
            <person name="Fujiwara T."/>
            <person name="Ono T."/>
            <person name="Yamada K."/>
            <person name="Fujii Y."/>
            <person name="Ozaki K."/>
            <person name="Hirao M."/>
            <person name="Ohmori Y."/>
            <person name="Kawabata A."/>
            <person name="Hikiji T."/>
            <person name="Kobatake N."/>
            <person name="Inagaki H."/>
            <person name="Ikema Y."/>
            <person name="Okamoto S."/>
            <person name="Okitani R."/>
            <person name="Kawakami T."/>
            <person name="Noguchi S."/>
            <person name="Itoh T."/>
            <person name="Shigeta K."/>
            <person name="Senba T."/>
            <person name="Matsumura K."/>
            <person name="Nakajima Y."/>
            <person name="Mizuno T."/>
            <person name="Morinaga M."/>
            <person name="Sasaki M."/>
            <person name="Togashi T."/>
            <person name="Oyama M."/>
            <person name="Hata H."/>
            <person name="Watanabe M."/>
            <person name="Komatsu T."/>
            <person name="Mizushima-Sugano J."/>
            <person name="Satoh T."/>
            <person name="Shirai Y."/>
            <person name="Takahashi Y."/>
            <person name="Nakagawa K."/>
            <person name="Okumura K."/>
            <person name="Nagase T."/>
            <person name="Nomura N."/>
            <person name="Kikuchi H."/>
            <person name="Masuho Y."/>
            <person name="Yamashita R."/>
            <person name="Nakai K."/>
            <person name="Yada T."/>
            <person name="Nakamura Y."/>
            <person name="Ohara O."/>
            <person name="Isogai T."/>
            <person name="Sugano S."/>
        </authorList>
    </citation>
    <scope>NUCLEOTIDE SEQUENCE [LARGE SCALE MRNA]</scope>
</reference>
<reference key="5">
    <citation type="submission" date="2005-09" db="EMBL/GenBank/DDBJ databases">
        <authorList>
            <person name="Mural R.J."/>
            <person name="Istrail S."/>
            <person name="Sutton G.G."/>
            <person name="Florea L."/>
            <person name="Halpern A.L."/>
            <person name="Mobarry C.M."/>
            <person name="Lippert R."/>
            <person name="Walenz B."/>
            <person name="Shatkay H."/>
            <person name="Dew I."/>
            <person name="Miller J.R."/>
            <person name="Flanigan M.J."/>
            <person name="Edwards N.J."/>
            <person name="Bolanos R."/>
            <person name="Fasulo D."/>
            <person name="Halldorsson B.V."/>
            <person name="Hannenhalli S."/>
            <person name="Turner R."/>
            <person name="Yooseph S."/>
            <person name="Lu F."/>
            <person name="Nusskern D.R."/>
            <person name="Shue B.C."/>
            <person name="Zheng X.H."/>
            <person name="Zhong F."/>
            <person name="Delcher A.L."/>
            <person name="Huson D.H."/>
            <person name="Kravitz S.A."/>
            <person name="Mouchard L."/>
            <person name="Reinert K."/>
            <person name="Remington K.A."/>
            <person name="Clark A.G."/>
            <person name="Waterman M.S."/>
            <person name="Eichler E.E."/>
            <person name="Adams M.D."/>
            <person name="Hunkapiller M.W."/>
            <person name="Myers E.W."/>
            <person name="Venter J.C."/>
        </authorList>
    </citation>
    <scope>NUCLEOTIDE SEQUENCE [LARGE SCALE GENOMIC DNA]</scope>
</reference>
<reference key="6">
    <citation type="journal article" date="2004" name="Genome Res.">
        <title>The status, quality, and expansion of the NIH full-length cDNA project: the Mammalian Gene Collection (MGC).</title>
        <authorList>
            <consortium name="The MGC Project Team"/>
        </authorList>
    </citation>
    <scope>NUCLEOTIDE SEQUENCE [LARGE SCALE MRNA]</scope>
    <source>
        <tissue>Brain</tissue>
    </source>
</reference>
<reference key="7">
    <citation type="submission" date="1999-07" db="EMBL/GenBank/DDBJ databases">
        <authorList>
            <person name="Xu H.S."/>
            <person name="Sheng H."/>
            <person name="Qin B.M."/>
            <person name="Liu Y.Q."/>
            <person name="Zhao B."/>
            <person name="Liu B."/>
            <person name="Wang X.Y."/>
            <person name="Zhang Q."/>
            <person name="Song L."/>
            <person name="Gao Y."/>
            <person name="Zhang C.L."/>
            <person name="Ye J."/>
            <person name="Ji X.J."/>
            <person name="Liu B.H."/>
            <person name="Lu H."/>
            <person name="Chen J.Z."/>
            <person name="Cai M.Q."/>
            <person name="Zheng W.Y."/>
            <person name="Teng C.Y."/>
            <person name="Liu Q."/>
            <person name="Yu L.T."/>
            <person name="Lin J."/>
            <person name="Gong Q."/>
            <person name="Zhang A.M."/>
            <person name="Gao R.L."/>
            <person name="Hui R.T."/>
        </authorList>
    </citation>
    <scope>NUCLEOTIDE SEQUENCE [LARGE SCALE MRNA] OF 391-580</scope>
    <source>
        <tissue>Aorta</tissue>
    </source>
</reference>
<reference key="8">
    <citation type="journal article" date="2002" name="FEBS Lett.">
        <title>Identification and characterization of the single channel function of human mucolipin-1 implicated in mucolipidosis type IV, a disorder affecting the lysosomal pathway.</title>
        <authorList>
            <person name="LaPlante J.M."/>
            <person name="Falardeau J."/>
            <person name="Sun M."/>
            <person name="Kanazirska M."/>
            <person name="Brown E.M."/>
            <person name="Slaugenhaupt S.A."/>
            <person name="Vassilev P.M."/>
        </authorList>
    </citation>
    <scope>FUNCTIONAL CHARACTERIZATION</scope>
    <scope>REGULATION BY CALCIUM</scope>
    <scope>SUBCELLULAR LOCATION</scope>
</reference>
<reference key="9">
    <citation type="journal article" date="2004" name="Biochem. Biophys. Res. Commun.">
        <title>Functional links between mucolipin-1 and Ca2+-dependent membrane trafficking in mucolipidosis IV.</title>
        <authorList>
            <person name="LaPlante J.M."/>
            <person name="Ye C.P."/>
            <person name="Quinn S.J."/>
            <person name="Goldin E."/>
            <person name="Brown E.M."/>
            <person name="Slaugenhaupt S.A."/>
            <person name="Vassilev P.M."/>
        </authorList>
    </citation>
    <scope>FUNCTION</scope>
</reference>
<reference key="10">
    <citation type="journal article" date="2004" name="FEBS Lett.">
        <title>Overexpression of wild-type and mutant mucolipin proteins in mammalian cells: effects on the late endocytic compartment organization.</title>
        <authorList>
            <person name="Manzoni M."/>
            <person name="Monti E."/>
            <person name="Bresciani R."/>
            <person name="Bozzato A."/>
            <person name="Barlati S."/>
            <person name="Bassi M.T."/>
            <person name="Borsani G."/>
        </authorList>
    </citation>
    <scope>SUBCELLULAR LOCATION</scope>
    <scope>CHARACTERIZATION OF VARIANTS ML4 PRO-232; PHE-408 DEL AND LEU-465</scope>
</reference>
<reference key="11">
    <citation type="journal article" date="2004" name="Hum. Mol. Genet.">
        <title>Molecular pathophysiology of mucolipidosis type IV: pH dysregulation of the mucolipin-1 cation channel.</title>
        <authorList>
            <person name="Raychowdhury M.K."/>
            <person name="Gonzalez-Perrett S."/>
            <person name="Montalbetti N."/>
            <person name="Timpanaro G.A."/>
            <person name="Chasan B."/>
            <person name="Goldmann W.H."/>
            <person name="Stahl S."/>
            <person name="Cooney A."/>
            <person name="Goldin E."/>
            <person name="Cantiello H.F."/>
        </authorList>
    </citation>
    <scope>FUNCTIONAL CHARACTERIZATION</scope>
    <scope>SUBUNIT</scope>
    <scope>CHARACTERIZATION OF VARIANTS ML4 TYR-362; PHE-408 DEL AND LEU-446</scope>
</reference>
<reference key="12">
    <citation type="journal article" date="2005" name="J. Biol. Chem.">
        <title>TRP-ML1 is a lysosomal monovalent cation channel that undergoes proteolytic cleavage.</title>
        <authorList>
            <person name="Kiselyov K."/>
            <person name="Chen J."/>
            <person name="Rbaibi Y."/>
            <person name="Oberdick D."/>
            <person name="Tjon-Kon-Sang S."/>
            <person name="Shcheynikov N."/>
            <person name="Muallem S."/>
            <person name="Soyombo A."/>
        </authorList>
    </citation>
    <scope>PROTEOLYTIC CLEAVAGE</scope>
    <scope>MUTAGENESIS OF ARG-200</scope>
</reference>
<reference key="13">
    <citation type="journal article" date="2006" name="Traffic">
        <title>Two di-leucine motifs regulate trafficking of mucolipin-1 to lysosomes.</title>
        <authorList>
            <person name="Vergarajauregui S."/>
            <person name="Puertollano R."/>
        </authorList>
    </citation>
    <scope>DILEUCINE MOTIFS</scope>
    <scope>SUBCELLULAR LOCATION</scope>
    <scope>PALMITOYLATION</scope>
    <scope>MUTAGENESIS OF LEU-15; 15-LEU-LEU-16; 565-CYS--CYS-567; LEU-577 AND 577-LEU-LEU-578</scope>
</reference>
<reference key="14">
    <citation type="journal article" date="2006" name="Traffic">
        <title>Mucolipin-1 is a lysosomal membrane protein required for intracellular lactosylceramide traffic.</title>
        <authorList>
            <person name="Pryor P.R."/>
            <person name="Reimann F."/>
            <person name="Gribble F.M."/>
            <person name="Luzio J.P."/>
        </authorList>
    </citation>
    <scope>FUNCTION</scope>
    <scope>MUTAGENESIS OF ASP-471</scope>
    <scope>SUBCELLULAR LOCATION</scope>
    <scope>CHARACTERIZATION OF VARIANT ML4 LEU-465</scope>
</reference>
<reference key="15">
    <citation type="journal article" date="2007" name="Traffic">
        <title>Integral and associated lysosomal membrane proteins.</title>
        <authorList>
            <person name="Schroeder B."/>
            <person name="Wrocklage C."/>
            <person name="Pan C."/>
            <person name="Jaeger R."/>
            <person name="Koesters B."/>
            <person name="Schaefer H."/>
            <person name="Elsaesser H.-P."/>
            <person name="Mann M."/>
            <person name="Hasilik A."/>
        </authorList>
    </citation>
    <scope>SUBCELLULAR LOCATION [LARGE SCALE ANALYSIS]</scope>
    <source>
        <tissue>Placenta</tissue>
    </source>
</reference>
<reference key="16">
    <citation type="journal article" date="2008" name="Biochem. J.">
        <title>Mucolipin 1 channel activity is regulated by protein kinase A-mediated phosphorylation.</title>
        <authorList>
            <person name="Vergarajauregui S."/>
            <person name="Oberdick R."/>
            <person name="Kiselyov K."/>
            <person name="Puertollano R."/>
        </authorList>
    </citation>
    <scope>PHOSPHORYLATION AT SER-557 AND SER-559</scope>
</reference>
<reference key="17">
    <citation type="journal article" date="2008" name="Nature">
        <title>The type IV mucolipidosis-associated protein TRPML1 is an endolysosomal iron release channel.</title>
        <authorList>
            <person name="Dong X.P."/>
            <person name="Cheng X."/>
            <person name="Mills E."/>
            <person name="Delling M."/>
            <person name="Wang F."/>
            <person name="Kurz T."/>
            <person name="Xu H."/>
        </authorList>
    </citation>
    <scope>FUNCTION</scope>
    <scope>CHARACTERIZATION OF VARIANTS ML4 PRO-232; TYR-362; CYS-403 AND LEU-446</scope>
    <scope>TRANSPORTER ACTIVITY</scope>
</reference>
<reference key="18">
    <citation type="journal article" date="2009" name="J. Biol. Chem.">
        <title>Identification of the penta-EF-hand protein ALG-2 as a Ca2+-dependent interactor of mucolipin-1.</title>
        <authorList>
            <person name="Vergarajauregui S."/>
            <person name="Martina J.A."/>
            <person name="Puertollano R."/>
        </authorList>
    </citation>
    <scope>INTERACTION WITH PDCD6</scope>
    <scope>MUTAGENESIS OF ARG-44; LEU-45; 44-ARG--LYS-46 AND 47-TYR--PHE-49</scope>
</reference>
<reference key="19">
    <citation type="journal article" date="2009" name="J. Proteome Res.">
        <title>Glycoproteomics analysis of human liver tissue by combination of multiple enzyme digestion and hydrazide chemistry.</title>
        <authorList>
            <person name="Chen R."/>
            <person name="Jiang X."/>
            <person name="Sun D."/>
            <person name="Han G."/>
            <person name="Wang F."/>
            <person name="Ye M."/>
            <person name="Wang L."/>
            <person name="Zou H."/>
        </authorList>
    </citation>
    <scope>GLYCOSYLATION [LARGE SCALE ANALYSIS] AT ASN-230</scope>
    <source>
        <tissue>Liver</tissue>
    </source>
</reference>
<reference key="20">
    <citation type="journal article" date="2010" name="J. Cell. Physiol.">
        <title>Functional multimerization of mucolipin channel proteins.</title>
        <authorList>
            <person name="Curcio-Morelli C."/>
            <person name="Zhang P."/>
            <person name="Venugopal B."/>
            <person name="Charles F.A."/>
            <person name="Browning M.F."/>
            <person name="Cantiello H.F."/>
            <person name="Slaugenhaupt S.A."/>
        </authorList>
    </citation>
    <scope>SUBUNIT</scope>
</reference>
<reference key="21">
    <citation type="journal article" date="2011" name="Exp. Cell Res.">
        <title>The cation channel mucolipin-1 is a bifunctional protein that facilitates membrane remodeling via its serine lipase domain.</title>
        <authorList>
            <person name="LaPlante J.M."/>
            <person name="Falardeau J.L."/>
            <person name="Brown E.M."/>
            <person name="Slaugenhaupt S.A."/>
            <person name="Vassilev P.M."/>
        </authorList>
    </citation>
    <scope>FUNCTION</scope>
    <scope>MUTAGENESIS OF TYR-109</scope>
    <scope>CHARACTERIZATION OF VARIANTS ML4 PRO-106 AND LEU-465</scope>
</reference>
<reference key="22">
    <citation type="journal article" date="2011" name="J. Cell Sci.">
        <title>LAPTMs regulate lysosomal function and interact with mucolipin 1: new clues for understanding mucolipidosis type IV.</title>
        <authorList>
            <person name="Vergarajauregui S."/>
            <person name="Martina J.A."/>
            <person name="Puertollano R."/>
        </authorList>
    </citation>
    <scope>INTERACTION WITH LAPTM4B</scope>
    <scope>SUBCELLULAR LOCATION</scope>
</reference>
<reference key="23">
    <citation type="journal article" date="2012" name="Proc. Natl. Acad. Sci. U.S.A.">
        <title>Phosphoinositide isoforms determine compartment-specific ion channel activity.</title>
        <authorList>
            <person name="Zhang X."/>
            <person name="Li X."/>
            <person name="Xu H."/>
        </authorList>
    </citation>
    <scope>ACTIVITY REGULATION</scope>
    <scope>PHOSPHOINOSITIDE-BINDING</scope>
    <scope>MUTAGENESIS OF 42-ARG--ARG-44 AND 61-ARG-LYS-62</scope>
</reference>
<reference key="24">
    <citation type="journal article" date="2014" name="Traffic">
        <title>Cellular zinc levels are modulated by TRPML1-TMEM163 interaction.</title>
        <authorList>
            <person name="Cuajungco M.P."/>
            <person name="Basilio L.C."/>
            <person name="Silva J."/>
            <person name="Hart T."/>
            <person name="Tringali J."/>
            <person name="Chen C.C."/>
            <person name="Biel M."/>
            <person name="Grimm C."/>
        </authorList>
    </citation>
    <scope>FUNCTION</scope>
    <scope>INTERACTION WITH TMEM163</scope>
</reference>
<reference key="25">
    <citation type="journal article" date="2015" name="Nat. Cell Biol.">
        <title>Lysosomal calcium signalling regulates autophagy through calcineurin and TFEB.</title>
        <authorList>
            <person name="Medina D.L."/>
            <person name="Di Paola S."/>
            <person name="Peluso I."/>
            <person name="Armani A."/>
            <person name="De Stefani D."/>
            <person name="Venditti R."/>
            <person name="Montefusco S."/>
            <person name="Scotto-Rosato A."/>
            <person name="Prezioso C."/>
            <person name="Forrester A."/>
            <person name="Settembre C."/>
            <person name="Wang W."/>
            <person name="Gao Q."/>
            <person name="Xu H."/>
            <person name="Sandri M."/>
            <person name="Rizzuto R."/>
            <person name="De Matteis M.A."/>
            <person name="Ballabio A."/>
        </authorList>
    </citation>
    <scope>FUNCTION</scope>
    <scope>TRANSPORTER ACTIVITY</scope>
    <scope>SUBCELLULAR LOCATION</scope>
</reference>
<reference key="26">
    <citation type="journal article" date="2015" name="Proc. Natl. Acad. Sci. U.S.A.">
        <title>Up-regulation of lysosomal TRPML1 channels is essential for lysosomal adaptation to nutrient starvation.</title>
        <authorList>
            <person name="Wang W."/>
            <person name="Gao Q."/>
            <person name="Yang M."/>
            <person name="Zhang X."/>
            <person name="Yu L."/>
            <person name="Lawas M."/>
            <person name="Li X."/>
            <person name="Bryant-Genevier M."/>
            <person name="Southall N.T."/>
            <person name="Marugan J."/>
            <person name="Ferrer M."/>
            <person name="Xu H."/>
        </authorList>
    </citation>
    <scope>FUNCTION</scope>
</reference>
<reference key="27">
    <citation type="journal article" date="2016" name="Dev. Cell">
        <title>PIKfyve Regulates Vacuole Maturation and Nutrient Recovery following Engulfment.</title>
        <authorList>
            <person name="Krishna S."/>
            <person name="Palm W."/>
            <person name="Lee Y."/>
            <person name="Yang W."/>
            <person name="Bandyopadhyay U."/>
            <person name="Xu H."/>
            <person name="Florey O."/>
            <person name="Thompson C.B."/>
            <person name="Overholtzer M."/>
        </authorList>
    </citation>
    <scope>FUNCTION</scope>
</reference>
<reference key="28">
    <citation type="journal article" date="2016" name="Elife">
        <title>Regulation of mTORC1 by lysosomal calcium and calmodulin.</title>
        <authorList>
            <person name="Li R.J."/>
            <person name="Xu J."/>
            <person name="Fu C."/>
            <person name="Zhang J."/>
            <person name="Zheng Y.G."/>
            <person name="Jia H."/>
            <person name="Liu J.O."/>
        </authorList>
    </citation>
    <scope>FUNCTION</scope>
</reference>
<reference key="29">
    <citation type="journal article" date="2016" name="Nat. Commun.">
        <title>MCOLN1 is a ROS sensor in lysosomes that regulates autophagy.</title>
        <authorList>
            <person name="Zhang X."/>
            <person name="Cheng X."/>
            <person name="Yu L."/>
            <person name="Yang J."/>
            <person name="Calvo R."/>
            <person name="Patnaik S."/>
            <person name="Hu X."/>
            <person name="Gao Q."/>
            <person name="Yang M."/>
            <person name="Lawas M."/>
            <person name="Delling M."/>
            <person name="Marugan J."/>
            <person name="Ferrer M."/>
            <person name="Xu H."/>
        </authorList>
    </citation>
    <scope>FUNCTION</scope>
</reference>
<reference key="30">
    <citation type="journal article" date="2017" name="Nat. Struct. Mol. Biol.">
        <title>Structural basis of dual Ca(2+)/pH regulation of the endolysosomal TRPML1 channel.</title>
        <authorList>
            <person name="Li M."/>
            <person name="Zhang W.K."/>
            <person name="Benvin N.M."/>
            <person name="Zhou X."/>
            <person name="Su D."/>
            <person name="Li H."/>
            <person name="Wang S."/>
            <person name="Michailidis I.E."/>
            <person name="Tong L."/>
            <person name="Li X."/>
            <person name="Yang J."/>
        </authorList>
    </citation>
    <scope>X-RAY CRYSTALLOGRAPHY (2.3 ANGSTROMS) OF 84-296</scope>
    <scope>EXTRACELLULAR/LUMENAL PORE-FORMING DOMAIN</scope>
    <scope>SUBUNIT</scope>
    <scope>ACTIVITY REGULATION</scope>
    <scope>MUTAGENESIS OF SER-110; ASP-111; GLY-112; ALA-113; ASP-114; ASP-115; LEU-144; ARG-146 AND VAL-432</scope>
    <scope>CHARACTERIZATION OF VARIANTS ML4 PRO-106 AND PRO-232</scope>
</reference>
<reference evidence="51 52" key="31">
    <citation type="journal article" date="2017" name="Nature">
        <title>Human TRPML1 channel structures in open and closed conformations.</title>
        <authorList>
            <person name="Schmiege P."/>
            <person name="Fine M."/>
            <person name="Blobel G."/>
            <person name="Li X."/>
        </authorList>
    </citation>
    <scope>STRUCTURE BY ELECTRON MICROSCOPY (3.49 ANGSTROMS)</scope>
    <scope>FUNCTION</scope>
    <scope>TRANSPORTER ACTIVITY</scope>
    <scope>ACTIVITY REGULATION</scope>
    <scope>SUBUNIT</scope>
    <scope>DISULFIDE BONDS</scope>
    <scope>TOPOLOGY</scope>
    <scope>MUTAGENESIS OF LEU-15 AND LEU-577</scope>
</reference>
<reference key="32">
    <citation type="journal article" date="2001" name="Hum. Mutat.">
        <title>Mucolipidosis type IV: novel MCOLN1 mutations in Jewish and non-Jewish patients and the frequency of the disease in the Ashkenazi Jewish population.</title>
        <authorList>
            <person name="Bargal R."/>
            <person name="Avidan N."/>
            <person name="Olender Z."/>
            <person name="Ben-Asher E."/>
            <person name="Zeigler M."/>
            <person name="Raas-Rothschild A."/>
            <person name="Frumkin A."/>
            <person name="Ben-Yoseph O."/>
            <person name="Friedlender Y."/>
            <person name="Lancet D."/>
            <person name="Bach G."/>
        </authorList>
    </citation>
    <scope>VARIANTS ML4 PRO-232; PHE-408 DEL AND LEU-465</scope>
</reference>
<reference key="33">
    <citation type="journal article" date="2002" name="Neurology">
        <title>The neurogenetics of mucolipidosis type IV.</title>
        <authorList>
            <person name="Altarescu G."/>
            <person name="Sun M."/>
            <person name="Moore D.F."/>
            <person name="Smith J.A."/>
            <person name="Wiggs E.A."/>
            <person name="Solomon B.I."/>
            <person name="Patronas N.J."/>
            <person name="Frei K.P."/>
            <person name="Gupta S."/>
            <person name="Kaneski C.R."/>
            <person name="Quarrell O.W."/>
            <person name="Slaugenhaupt S.A."/>
            <person name="Goldin E."/>
            <person name="Schiffmann R."/>
        </authorList>
    </citation>
    <scope>VARIANTS ML4 PRO-106; TYR-362; PHE-408 DEL AND PRO-447</scope>
</reference>
<reference key="34">
    <citation type="journal article" date="2004" name="Hum. Mutat.">
        <title>Transfer of a mitochondrial DNA fragment to MCOLN1 causes an inherited case of mucolipidosis IV.</title>
        <authorList>
            <person name="Goldin E."/>
            <person name="Stahl S."/>
            <person name="Cooney A.M."/>
            <person name="Kaneski C.R."/>
            <person name="Gupta S."/>
            <person name="Brady R.O."/>
            <person name="Ellis J.R."/>
            <person name="Schiffmann R."/>
        </authorList>
    </citation>
    <scope>VARIANT ML4 CYS-403</scope>
</reference>
<reference key="35">
    <citation type="journal article" date="2006" name="Science">
        <title>The consensus coding sequences of human breast and colorectal cancers.</title>
        <authorList>
            <person name="Sjoeblom T."/>
            <person name="Jones S."/>
            <person name="Wood L.D."/>
            <person name="Parsons D.W."/>
            <person name="Lin J."/>
            <person name="Barber T.D."/>
            <person name="Mandelker D."/>
            <person name="Leary R.J."/>
            <person name="Ptak J."/>
            <person name="Silliman N."/>
            <person name="Szabo S."/>
            <person name="Buckhaults P."/>
            <person name="Farrell C."/>
            <person name="Meeh P."/>
            <person name="Markowitz S.D."/>
            <person name="Willis J."/>
            <person name="Dawson D."/>
            <person name="Willson J.K.V."/>
            <person name="Gazdar A.F."/>
            <person name="Hartigan J."/>
            <person name="Wu L."/>
            <person name="Liu C."/>
            <person name="Parmigiani G."/>
            <person name="Park B.H."/>
            <person name="Bachman K.E."/>
            <person name="Papadopoulos N."/>
            <person name="Vogelstein B."/>
            <person name="Kinzler K.W."/>
            <person name="Velculescu V.E."/>
        </authorList>
    </citation>
    <scope>VARIANT [LARGE SCALE ANALYSIS] LEU-331</scope>
</reference>
<reference key="36">
    <citation type="journal article" date="2010" name="Pediatr. Neurol.">
        <title>Mucolipidosis type IV: a subtle pediatric neurodegenerative disorder.</title>
        <authorList>
            <person name="Geer J.S."/>
            <person name="Skinner S.A."/>
            <person name="Goldin E."/>
            <person name="Holden K.R."/>
        </authorList>
    </citation>
    <scope>VARIANT ML4 PRO-232</scope>
</reference>
<reference key="37">
    <citation type="journal article" date="2024" name="Am. J. Ophthalmol.">
        <title>Lisch epithelial corneal dystrophy is caused by heterozygous loss-of-function variants in MCOLN1.</title>
        <authorList>
            <person name="Patterson K."/>
            <person name="Chong J.X."/>
            <person name="Chung D.D."/>
            <person name="Lisch W."/>
            <person name="Karp C.L."/>
            <person name="Dreisler E."/>
            <person name="Lockington D."/>
            <person name="Rohrbach J.M."/>
            <person name="Garczarczyk-Asim D."/>
            <person name="Mueller T."/>
            <person name="Tuft S.J."/>
            <person name="Skalicka P."/>
            <person name="Wilnai Y."/>
            <person name="Samra N.N."/>
            <person name="Ibrahim A."/>
            <person name="Mandel H."/>
            <person name="Davidson A.E."/>
            <person name="Liskova P."/>
            <person name="Aldave A.J."/>
            <person name="Bamshad M.J."/>
            <person name="Janecke A.R."/>
        </authorList>
    </citation>
    <scope>VARIANTS LECD 172-ARG--ASN-580 DEL; 192-CYS--ASN-580 DEL; PRO-232; PRO-259; 291-GLN--ASN-580 DEL; 337-GLN--ASN-580 DEL AND 444-TRP--ASN-580 DEL</scope>
    <scope>INVOLVEMENT IN LECD</scope>
</reference>
<feature type="chain" id="PRO_0000215362" description="Mucolipin-1">
    <location>
        <begin position="1"/>
        <end position="580"/>
    </location>
</feature>
<feature type="topological domain" description="Cytoplasmic" evidence="33">
    <location>
        <begin position="1"/>
        <end position="65"/>
    </location>
</feature>
<feature type="transmembrane region" description="Helical; Name=1" evidence="33">
    <location>
        <begin position="66"/>
        <end position="86"/>
    </location>
</feature>
<feature type="topological domain" description="Extracellular" evidence="33">
    <location>
        <begin position="87"/>
        <end position="298"/>
    </location>
</feature>
<feature type="transmembrane region" description="Helical; Name=2" evidence="33">
    <location>
        <begin position="299"/>
        <end position="321"/>
    </location>
</feature>
<feature type="topological domain" description="Cytoplasmic" evidence="33">
    <location>
        <begin position="322"/>
        <end position="350"/>
    </location>
</feature>
<feature type="transmembrane region" description="Helical; Name=3" evidence="33">
    <location>
        <begin position="351"/>
        <end position="371"/>
    </location>
</feature>
<feature type="topological domain" description="Extracellular" evidence="33">
    <location>
        <begin position="372"/>
        <end position="382"/>
    </location>
</feature>
<feature type="transmembrane region" description="Helical; Name=4" evidence="33">
    <location>
        <begin position="383"/>
        <end position="405"/>
    </location>
</feature>
<feature type="topological domain" description="Cytoplasmic" evidence="33">
    <location>
        <begin position="406"/>
        <end position="427"/>
    </location>
</feature>
<feature type="transmembrane region" description="Helical; Name=5" evidence="33">
    <location>
        <begin position="428"/>
        <end position="448"/>
    </location>
</feature>
<feature type="topological domain" description="Extracellular" evidence="33">
    <location>
        <begin position="449"/>
        <end position="456"/>
    </location>
</feature>
<feature type="intramembrane region" description="Pore-forming" evidence="33">
    <location>
        <begin position="457"/>
        <end position="477"/>
    </location>
</feature>
<feature type="topological domain" description="Extracellular" evidence="33">
    <location>
        <begin position="478"/>
        <end position="491"/>
    </location>
</feature>
<feature type="transmembrane region" description="Helical; Name=6" evidence="33">
    <location>
        <begin position="492"/>
        <end position="513"/>
    </location>
</feature>
<feature type="topological domain" description="Cytoplasmic" evidence="33">
    <location>
        <begin position="514"/>
        <end position="580"/>
    </location>
</feature>
<feature type="region of interest" description="Disordered" evidence="2">
    <location>
        <begin position="1"/>
        <end position="38"/>
    </location>
</feature>
<feature type="region of interest" description="Interaction with phosphoinositides" evidence="25">
    <location>
        <begin position="42"/>
        <end position="62"/>
    </location>
</feature>
<feature type="region of interest" description="Extracellular/lumenal pore loop" evidence="45">
    <location>
        <begin position="107"/>
        <end position="121"/>
    </location>
</feature>
<feature type="region of interest" description="Required for palmitoylation and association with membranes" evidence="14">
    <location>
        <begin position="565"/>
        <end position="567"/>
    </location>
</feature>
<feature type="short sequence motif" description="Dileucine motif; mediates targeting to lysosomes" evidence="14">
    <location>
        <begin position="11"/>
        <end position="16"/>
    </location>
</feature>
<feature type="short sequence motif" description="Selectivity filter" evidence="46">
    <location>
        <begin position="469"/>
        <end position="474"/>
    </location>
</feature>
<feature type="short sequence motif" description="Dileucine internalization motif; mediates AP2 complex-dependent internalization" evidence="14">
    <location>
        <begin position="573"/>
        <end position="578"/>
    </location>
</feature>
<feature type="modified residue" description="Phosphoserine" evidence="1">
    <location>
        <position position="10"/>
    </location>
</feature>
<feature type="modified residue" description="Phosphoserine; by PAK" evidence="17">
    <location>
        <position position="557"/>
    </location>
</feature>
<feature type="modified residue" description="Phosphoserine; by PAK" evidence="17">
    <location>
        <position position="559"/>
    </location>
</feature>
<feature type="glycosylation site" description="N-linked (GlcNAc...) asparagine" evidence="19">
    <location>
        <position position="230"/>
    </location>
</feature>
<feature type="disulfide bond" evidence="32 33 48 49 50 51 52">
    <location>
        <begin position="166"/>
        <end position="192"/>
    </location>
</feature>
<feature type="disulfide bond" evidence="32 33 48 49 50 51 52">
    <location>
        <begin position="253"/>
        <end position="284"/>
    </location>
</feature>
<feature type="sequence variant" id="VAR_019369" description="In ML4; decreases formation and extrusion of tubulo-vesicular structures when overexpressed; disrupts tetrameric assembly; abolishes lysosomal localization; dbSNP:rs797044825." evidence="7 24 32">
    <original>L</original>
    <variation>P</variation>
    <location>
        <position position="106"/>
    </location>
</feature>
<feature type="sequence variant" id="VAR_089511" description="In ML4 and LECD; pathogenic." evidence="5 34">
    <location>
        <begin position="172"/>
        <end position="580"/>
    </location>
</feature>
<feature type="sequence variant" id="VAR_089512" description="In LECD; pathogenic." evidence="34">
    <location>
        <begin position="192"/>
        <end position="580"/>
    </location>
</feature>
<feature type="sequence variant" id="VAR_019370" description="In ML4 and LECD; likely pathogenic; fails to localize to late endosomes; abolishes Fe(2+) permeability; disrupts tetrameric assembly; abolishes lysosomal localization; dbSNP:rs767122713." evidence="6 10 18 22 32 34">
    <original>T</original>
    <variation>P</variation>
    <location>
        <position position="232"/>
    </location>
</feature>
<feature type="sequence variant" id="VAR_089513" description="In LECD; uncertain significance; dbSNP:rs371812721." evidence="34">
    <original>L</original>
    <variation>P</variation>
    <location>
        <position position="259"/>
    </location>
</feature>
<feature type="sequence variant" id="VAR_089514" description="In LECD; likely pathogenic." evidence="34">
    <location>
        <begin position="291"/>
        <end position="580"/>
    </location>
</feature>
<feature type="sequence variant" id="VAR_036453" description="In a breast cancer sample; somatic mutation." evidence="15">
    <original>V</original>
    <variation>L</variation>
    <location>
        <position position="331"/>
    </location>
</feature>
<feature type="sequence variant" id="VAR_089515" description="In LECD; likely pathogenic." evidence="34">
    <location>
        <begin position="337"/>
        <end position="580"/>
    </location>
</feature>
<feature type="sequence variant" id="VAR_019371" description="In ML4; affects channel activity; abolishes Fe(2+) permeability; dbSNP:rs121908372." evidence="5 7 9 18">
    <original>D</original>
    <variation>Y</variation>
    <location>
        <position position="362"/>
    </location>
</feature>
<feature type="sequence variant" id="VAR_038380" description="In ML4; impairs Fe(2+) permeability; dbSNP:rs121908374." evidence="12 18">
    <original>R</original>
    <variation>C</variation>
    <location>
        <position position="403"/>
    </location>
</feature>
<feature type="sequence variant" id="VAR_019372" description="In ML4; mild psychomotor involvement; does not affect channel activity; affects channel inhibition by low pH; still localizes to late endosomes; dbSNP:rs797044817." evidence="5 6 7 9 10">
    <location>
        <position position="408"/>
    </location>
</feature>
<feature type="sequence variant" id="VAR_089516" description="In LECD; uncertain significance." evidence="34">
    <location>
        <begin position="444"/>
        <end position="580"/>
    </location>
</feature>
<feature type="sequence variant" id="VAR_019373" description="In ML4; does not affect channel activity; affects channel inhibition by low pH; impairs Fe(2+) permeability; dbSNP:rs754097561." evidence="5 9 18">
    <original>V</original>
    <variation>L</variation>
    <location>
        <position position="446"/>
    </location>
</feature>
<feature type="sequence variant" id="VAR_019374" description="In ML4; dbSNP:rs797044827." evidence="7">
    <original>L</original>
    <variation>P</variation>
    <location>
        <position position="447"/>
    </location>
</feature>
<feature type="sequence variant" id="VAR_019375" description="In ML4; still localizes to late endosomes; fails to rescue defect of lactosylceramide traffic through the late endocytic pathway in ML4 patient cells; minor effect on formation and extrusion of tubulo-vesicular structures when overexpressed; dbSNP:rs797044828." evidence="6 10 16 24">
    <original>F</original>
    <variation>L</variation>
    <location>
        <position position="465"/>
    </location>
</feature>
<feature type="mutagenesis site" description="No effect on localization to lysosomes." evidence="14">
    <original>LL</original>
    <variation>AA</variation>
    <location>
        <begin position="15"/>
        <end position="16"/>
    </location>
</feature>
<feature type="mutagenesis site" description="Abolishes localization to lysosomes and leads to expression at the cell membrane; when associated with A-577." evidence="14 33">
    <original>L</original>
    <variation>A</variation>
    <location>
        <position position="15"/>
    </location>
</feature>
<feature type="mutagenesis site" description="Reduces PtdIns(4,5)P2 sensitivity." evidence="25">
    <original>RRR</original>
    <variation>AAA</variation>
    <location>
        <begin position="42"/>
        <end position="44"/>
    </location>
</feature>
<feature type="mutagenesis site" description="Abolishes interaction with PDCD6 and decreases formation of aberrant endosomes upon overexpression." evidence="20">
    <original>RLK</original>
    <variation>AAA</variation>
    <location>
        <begin position="44"/>
        <end position="46"/>
    </location>
</feature>
<feature type="mutagenesis site" description="Abolishes interaction with PDCD6." evidence="20">
    <original>R</original>
    <variation>A</variation>
    <location>
        <position position="44"/>
    </location>
</feature>
<feature type="mutagenesis site" description="Abolishes interaction with PDCD6." evidence="20">
    <original>L</original>
    <variation>A</variation>
    <location>
        <position position="45"/>
    </location>
</feature>
<feature type="mutagenesis site" description="Abolishes interaction with PDCD6." evidence="20">
    <original>YFF</original>
    <variation>AAA</variation>
    <location>
        <begin position="47"/>
        <end position="49"/>
    </location>
</feature>
<feature type="mutagenesis site" description="Reduces PtdIns(3,5)P2 sensitivity." evidence="25">
    <original>RK</original>
    <variation>AA</variation>
    <location>
        <begin position="61"/>
        <end position="62"/>
    </location>
</feature>
<feature type="mutagenesis site" description="Abolishes formation and extrusion of tubulo-vesicular structures and decreases lysosomal exocytosis when overexpressed." evidence="24">
    <original>Y</original>
    <variation>G</variation>
    <location>
        <position position="109"/>
    </location>
</feature>
<feature type="mutagenesis site" description="Modulates ion conduction; when associoated with C-112 and C-113." evidence="32">
    <original>S</original>
    <variation>C</variation>
    <location>
        <position position="110"/>
    </location>
</feature>
<feature type="mutagenesis site" description="Modulates inhibition by Ca(2+) at different pH levels but does not abolish channel inward rectification; when associated with Q-114 and Q-115." evidence="32">
    <original>D</original>
    <variation>Q</variation>
    <location>
        <position position="111"/>
    </location>
</feature>
<feature type="mutagenesis site" description="Modulates ion conduction; when associoated with C-110 and C-113." evidence="32">
    <original>G</original>
    <variation>C</variation>
    <location>
        <position position="112"/>
    </location>
</feature>
<feature type="mutagenesis site" description="Modulates ion conduction; when associoated with C-110 and C-112." evidence="32">
    <original>A</original>
    <variation>C</variation>
    <location>
        <position position="113"/>
    </location>
</feature>
<feature type="mutagenesis site" description="Modulates inhibition by Ca(2+) at different pH levels but does not abolish channel inward rectification; when associated with Q-111 and Q-115." evidence="32">
    <original>D</original>
    <variation>Q</variation>
    <location>
        <position position="114"/>
    </location>
</feature>
<feature type="mutagenesis site" description="Modulates inhibition by Ca(2+) at different pH levels but does not abolish channel inward rectification; when associated with Q-111 and Q-114." evidence="32">
    <original>D</original>
    <variation>Q</variation>
    <location>
        <position position="115"/>
    </location>
</feature>
<feature type="mutagenesis site" description="Disrupts tetrameric assembly and abolishes lysosomal localization; when associated with S-146." evidence="32">
    <original>L</original>
    <variation>K</variation>
    <location>
        <position position="144"/>
    </location>
</feature>
<feature type="mutagenesis site" description="Disrupts tetrameric assembly and abolishes lysosomal localization; when associated with K-144." evidence="32">
    <original>R</original>
    <variation>S</variation>
    <location>
        <position position="146"/>
    </location>
</feature>
<feature type="mutagenesis site" description="Does not prevent proteolytic cleavage but changes cleavage pattern." evidence="13">
    <original>R</original>
    <variation>H</variation>
    <location>
        <position position="200"/>
    </location>
</feature>
<feature type="mutagenesis site" description="Mediates localization to the plasma membrane and strong inwardly rectifying current." evidence="32">
    <original>V</original>
    <variation>P</variation>
    <location>
        <position position="432"/>
    </location>
</feature>
<feature type="mutagenesis site" description="Fails to rescue defect of lactosylceramide traffic through the late endocytic pathway in ML4 patient cells." evidence="16">
    <original>D</original>
    <variation>A</variation>
    <location>
        <position position="471"/>
    </location>
</feature>
<feature type="mutagenesis site" description="Abolishes association with membranes." evidence="14">
    <original>CCC</original>
    <variation>AAA</variation>
    <location>
        <begin position="565"/>
        <end position="567"/>
    </location>
</feature>
<feature type="mutagenesis site" description="No effect on localization to lysosomes." evidence="14">
    <original>LL</original>
    <variation>AA</variation>
    <location>
        <begin position="577"/>
        <end position="578"/>
    </location>
</feature>
<feature type="mutagenesis site" description="Abolishes localization to lysosomes and leads to expression at the cell membrane; when associated with A-15." evidence="14 33">
    <original>L</original>
    <variation>A</variation>
    <location>
        <position position="577"/>
    </location>
</feature>
<feature type="sequence conflict" description="In Ref. 3; AAG42242." evidence="40" ref="3">
    <original>ALCQRYYHRGHVDPANDTFDIDPMVVTD</original>
    <variation>LSASGTTTEATWTRPTTHLTLIRWWLLVN</variation>
    <location>
        <begin position="164"/>
        <end position="191"/>
    </location>
</feature>
<feature type="sequence conflict" description="In Ref. 1; CAC08215." evidence="40" ref="1">
    <original>P</original>
    <variation>S</variation>
    <location>
        <position position="203"/>
    </location>
</feature>
<feature type="helix" evidence="56">
    <location>
        <begin position="41"/>
        <end position="49"/>
    </location>
</feature>
<feature type="helix" evidence="56">
    <location>
        <begin position="52"/>
        <end position="58"/>
    </location>
</feature>
<feature type="helix" evidence="53">
    <location>
        <begin position="84"/>
        <end position="105"/>
    </location>
</feature>
<feature type="turn" evidence="53">
    <location>
        <begin position="114"/>
        <end position="116"/>
    </location>
</feature>
<feature type="helix" evidence="53">
    <location>
        <begin position="122"/>
        <end position="137"/>
    </location>
</feature>
<feature type="helix" evidence="53">
    <location>
        <begin position="139"/>
        <end position="142"/>
    </location>
</feature>
<feature type="strand" evidence="55">
    <location>
        <begin position="143"/>
        <end position="145"/>
    </location>
</feature>
<feature type="strand" evidence="54">
    <location>
        <begin position="148"/>
        <end position="151"/>
    </location>
</feature>
<feature type="strand" evidence="53">
    <location>
        <begin position="154"/>
        <end position="156"/>
    </location>
</feature>
<feature type="strand" evidence="53">
    <location>
        <begin position="162"/>
        <end position="176"/>
    </location>
</feature>
<feature type="helix" evidence="53">
    <location>
        <begin position="177"/>
        <end position="179"/>
    </location>
</feature>
<feature type="strand" evidence="53">
    <location>
        <begin position="181"/>
        <end position="195"/>
    </location>
</feature>
<feature type="helix" evidence="55">
    <location>
        <begin position="218"/>
        <end position="220"/>
    </location>
</feature>
<feature type="helix" evidence="53">
    <location>
        <begin position="225"/>
        <end position="227"/>
    </location>
</feature>
<feature type="strand" evidence="53">
    <location>
        <begin position="228"/>
        <end position="241"/>
    </location>
</feature>
<feature type="helix" evidence="53">
    <location>
        <begin position="242"/>
        <end position="247"/>
    </location>
</feature>
<feature type="strand" evidence="53">
    <location>
        <begin position="252"/>
        <end position="263"/>
    </location>
</feature>
<feature type="strand" evidence="53">
    <location>
        <begin position="271"/>
        <end position="282"/>
    </location>
</feature>
<feature type="helix" evidence="56">
    <location>
        <begin position="291"/>
        <end position="293"/>
    </location>
</feature>
<feature type="helix" evidence="56">
    <location>
        <begin position="295"/>
        <end position="337"/>
    </location>
</feature>
<feature type="helix" evidence="56">
    <location>
        <begin position="346"/>
        <end position="349"/>
    </location>
</feature>
<feature type="helix" evidence="56">
    <location>
        <begin position="353"/>
        <end position="377"/>
    </location>
</feature>
<feature type="helix" evidence="56">
    <location>
        <begin position="383"/>
        <end position="399"/>
    </location>
</feature>
<feature type="helix" evidence="56">
    <location>
        <begin position="402"/>
        <end position="405"/>
    </location>
</feature>
<feature type="helix" evidence="56">
    <location>
        <begin position="409"/>
        <end position="447"/>
    </location>
</feature>
<feature type="turn" evidence="56">
    <location>
        <begin position="448"/>
        <end position="450"/>
    </location>
</feature>
<feature type="helix" evidence="56">
    <location>
        <begin position="452"/>
        <end position="454"/>
    </location>
</feature>
<feature type="helix" evidence="56">
    <location>
        <begin position="457"/>
        <end position="467"/>
    </location>
</feature>
<feature type="turn" evidence="56">
    <location>
        <begin position="468"/>
        <end position="470"/>
    </location>
</feature>
<feature type="helix" evidence="56">
    <location>
        <begin position="473"/>
        <end position="481"/>
    </location>
</feature>
<feature type="turn" evidence="56">
    <location>
        <begin position="482"/>
        <end position="486"/>
    </location>
</feature>
<feature type="helix" evidence="56">
    <location>
        <begin position="488"/>
        <end position="507"/>
    </location>
</feature>
<feature type="helix" evidence="56">
    <location>
        <begin position="510"/>
        <end position="524"/>
    </location>
</feature>
<proteinExistence type="evidence at protein level"/>